<feature type="chain" id="PRO_0000423977" description="Immunity protein WapI">
    <location>
        <begin position="1"/>
        <end position="119"/>
    </location>
</feature>
<reference key="1">
    <citation type="journal article" date="2010" name="BMC Genomics">
        <title>Whole genome assembly of a natto production strain Bacillus subtilis natto from very short read data.</title>
        <authorList>
            <person name="Nishito Y."/>
            <person name="Osana Y."/>
            <person name="Hachiya T."/>
            <person name="Popendorf K."/>
            <person name="Toyoda A."/>
            <person name="Fujiyama A."/>
            <person name="Itaya M."/>
            <person name="Sakakibara Y."/>
        </authorList>
    </citation>
    <scope>NUCLEOTIDE SEQUENCE [LARGE SCALE GENOMIC DNA]</scope>
    <source>
        <strain>BEST195</strain>
    </source>
</reference>
<reference key="2">
    <citation type="journal article" date="2014" name="PLoS ONE">
        <title>Whole genome complete resequencing of Bacillus subtilis natto by combining long reads with high-quality short reads.</title>
        <authorList>
            <person name="Kamada M."/>
            <person name="Hase S."/>
            <person name="Sato K."/>
            <person name="Toyoda A."/>
            <person name="Fujiyama A."/>
            <person name="Sakakibara Y."/>
        </authorList>
    </citation>
    <scope>GENOME REANNOTATION</scope>
    <source>
        <strain>BEST195</strain>
    </source>
</reference>
<reference key="3">
    <citation type="journal article" date="2013" name="Proc. Natl. Acad. Sci. U.S.A.">
        <title>Rhs proteins from diverse bacteria mediate intercellular competition.</title>
        <authorList>
            <person name="Koskiniemi S."/>
            <person name="Lamoureux J.G."/>
            <person name="Nikolakakis K.C."/>
            <person name="t'Kint de Roodenbeke C."/>
            <person name="Kaplan M.D."/>
            <person name="Low D.A."/>
            <person name="Hayes C.S."/>
        </authorList>
    </citation>
    <scope>FUNCTION AS AN IMMUNITY PROTEIN</scope>
    <scope>EXPRESSION IN E.COLI</scope>
    <source>
        <strain>BEST195</strain>
    </source>
</reference>
<accession>D4G3R3</accession>
<evidence type="ECO:0000269" key="1">
    <source>
    </source>
</evidence>
<proteinExistence type="evidence at protein level"/>
<gene>
    <name type="primary">wapI</name>
    <name type="ORF">BSNT_10604</name>
</gene>
<sequence length="119" mass="14709">MKFFKRYNIDQKTLDEFKKYYVLLHGPFPNDMYDFEEETNTSLDEFYEFFALITGSLNYIIEDKKIPRYQREMLKKTFYEHYPHFRNYKSDILKYQELSECLEFHEKIRILINKLITGG</sequence>
<protein>
    <recommendedName>
        <fullName>Immunity protein WapI</fullName>
    </recommendedName>
</protein>
<dbReference type="EMBL" id="AP011541">
    <property type="protein sequence ID" value="BAI87616.1"/>
    <property type="molecule type" value="Genomic_DNA"/>
</dbReference>
<dbReference type="RefSeq" id="WP_014481370.1">
    <property type="nucleotide sequence ID" value="NC_017196.2"/>
</dbReference>
<dbReference type="STRING" id="86029.AWV81_20950"/>
<dbReference type="KEGG" id="bso:BSNT_10604"/>
<dbReference type="PATRIC" id="fig|645657.3.peg.830"/>
<dbReference type="HOGENOM" id="CLU_154373_0_0_9"/>
<dbReference type="InterPro" id="IPR025551">
    <property type="entry name" value="WapI/YxiJ-like"/>
</dbReference>
<dbReference type="Pfam" id="PF14176">
    <property type="entry name" value="YxiJ"/>
    <property type="match status" value="1"/>
</dbReference>
<comment type="function">
    <text evidence="1">Immunity protein component of a toxin-immunity protein module, which functions as a cellular contact-dependent growth inhibition (CDI) system. Neutralizes the tRNase activity of cognate toxin WapA upon expression in E.coli. Does not inhibit WapA from other strains of B.subtilis. The WapA C-terminus cannot be expressed on its own in E.coli, however it can be cloned in the presence of its cognate immunity protein gene. Cell contact is probably necessary for growth inhibition.</text>
</comment>
<name>WAPI_BACNB</name>
<organism>
    <name type="scientific">Bacillus subtilis subsp. natto (strain BEST195)</name>
    <dbReference type="NCBI Taxonomy" id="645657"/>
    <lineage>
        <taxon>Bacteria</taxon>
        <taxon>Bacillati</taxon>
        <taxon>Bacillota</taxon>
        <taxon>Bacilli</taxon>
        <taxon>Bacillales</taxon>
        <taxon>Bacillaceae</taxon>
        <taxon>Bacillus</taxon>
    </lineage>
</organism>